<reference key="1">
    <citation type="journal article" date="1999" name="DNA Res.">
        <title>Complete structure of the chloroplast genome of Arabidopsis thaliana.</title>
        <authorList>
            <person name="Sato S."/>
            <person name="Nakamura Y."/>
            <person name="Kaneko T."/>
            <person name="Asamizu E."/>
            <person name="Tabata S."/>
        </authorList>
    </citation>
    <scope>NUCLEOTIDE SEQUENCE [LARGE SCALE GENOMIC DNA]</scope>
    <source>
        <strain>cv. Columbia</strain>
    </source>
</reference>
<reference key="2">
    <citation type="journal article" date="1991" name="Plant Mol. Biol.">
        <title>Partial conservation of the 5' ndhE-psaC-ndhD 3' gene arrangement of chloroplasts in the cyanobacterium Synechocystis sp. PCC 6803: implications for NDH-D function in cyanobacteria and chloroplasts.</title>
        <authorList>
            <person name="Anderson S.L."/>
            <person name="McIntosh L."/>
        </authorList>
    </citation>
    <scope>NUCLEOTIDE SEQUENCE [GENOMIC DNA] OF 1-85</scope>
</reference>
<reference key="3">
    <citation type="journal article" date="2001" name="J. Exp. Bot.">
        <title>Primary transcripts of ndhD of Liliaceae and Aloaceae require editing of the start and 20th codons.</title>
        <authorList>
            <person name="Lopez-Serrano M."/>
            <person name="del Campo E.M."/>
            <person name="Sabater B."/>
            <person name="Martin M."/>
        </authorList>
    </citation>
    <scope>NUCLEOTIDE SEQUENCE [GENOMIC DNA] OF 1-52</scope>
    <scope>RNA EDITING OF INITIATOR CODON</scope>
    <source>
        <tissue>Leaf</tissue>
    </source>
</reference>
<dbReference type="EC" id="7.1.1.-"/>
<dbReference type="EMBL" id="AP000423">
    <property type="protein sequence ID" value="BAA84437.1"/>
    <property type="status" value="ALT_SEQ"/>
    <property type="molecule type" value="Genomic_DNA"/>
</dbReference>
<dbReference type="EMBL" id="X53842">
    <property type="protein sequence ID" value="CAA37837.1"/>
    <property type="status" value="ALT_FRAME"/>
    <property type="molecule type" value="Genomic_DNA"/>
</dbReference>
<dbReference type="EMBL" id="AJ278354">
    <property type="protein sequence ID" value="CAB96191.2"/>
    <property type="molecule type" value="Genomic_DNA"/>
</dbReference>
<dbReference type="PIR" id="S14968">
    <property type="entry name" value="S14968"/>
</dbReference>
<dbReference type="RefSeq" id="NP_051109.2">
    <property type="nucleotide sequence ID" value="NC_000932.1"/>
</dbReference>
<dbReference type="PDB" id="7WFF">
    <property type="method" value="EM"/>
    <property type="resolution" value="3.59 A"/>
    <property type="chains" value="D=2-500"/>
</dbReference>
<dbReference type="PDBsum" id="7WFF"/>
<dbReference type="SMR" id="P26288"/>
<dbReference type="FunCoup" id="P26288">
    <property type="interactions" value="22"/>
</dbReference>
<dbReference type="STRING" id="3702.P26288"/>
<dbReference type="TCDB" id="3.D.1.8.1">
    <property type="family name" value="the h+ or na+-translocating nadh dehydrogenase (ndh) family"/>
</dbReference>
<dbReference type="PaxDb" id="3702-ATCG01050.1"/>
<dbReference type="ProteomicsDB" id="249333"/>
<dbReference type="GeneID" id="844756"/>
<dbReference type="KEGG" id="ath:ArthCp074"/>
<dbReference type="Araport" id="ATCG01050"/>
<dbReference type="TAIR" id="ATCG01050"/>
<dbReference type="eggNOG" id="KOG4845">
    <property type="taxonomic scope" value="Eukaryota"/>
</dbReference>
<dbReference type="HOGENOM" id="CLU_007100_4_0_1"/>
<dbReference type="InParanoid" id="P26288"/>
<dbReference type="BioCyc" id="ARA:ATCG01050-MONOMER"/>
<dbReference type="PRO" id="PR:P26288"/>
<dbReference type="Proteomes" id="UP000006548">
    <property type="component" value="Chloroplast Pltd"/>
</dbReference>
<dbReference type="ExpressionAtlas" id="P26288">
    <property type="expression patterns" value="baseline and differential"/>
</dbReference>
<dbReference type="GO" id="GO:0009535">
    <property type="term" value="C:chloroplast thylakoid membrane"/>
    <property type="evidence" value="ECO:0007669"/>
    <property type="project" value="UniProtKB-SubCell"/>
</dbReference>
<dbReference type="GO" id="GO:0008137">
    <property type="term" value="F:NADH dehydrogenase (ubiquinone) activity"/>
    <property type="evidence" value="ECO:0007669"/>
    <property type="project" value="InterPro"/>
</dbReference>
<dbReference type="GO" id="GO:0048039">
    <property type="term" value="F:ubiquinone binding"/>
    <property type="evidence" value="ECO:0000318"/>
    <property type="project" value="GO_Central"/>
</dbReference>
<dbReference type="GO" id="GO:0009060">
    <property type="term" value="P:aerobic respiration"/>
    <property type="evidence" value="ECO:0000318"/>
    <property type="project" value="GO_Central"/>
</dbReference>
<dbReference type="GO" id="GO:0042773">
    <property type="term" value="P:ATP synthesis coupled electron transport"/>
    <property type="evidence" value="ECO:0007669"/>
    <property type="project" value="InterPro"/>
</dbReference>
<dbReference type="GO" id="GO:0015990">
    <property type="term" value="P:electron transport coupled proton transport"/>
    <property type="evidence" value="ECO:0000318"/>
    <property type="project" value="GO_Central"/>
</dbReference>
<dbReference type="HAMAP" id="MF_00491">
    <property type="entry name" value="NDH1_NuoM"/>
    <property type="match status" value="1"/>
</dbReference>
<dbReference type="InterPro" id="IPR022997">
    <property type="entry name" value="NADH_Q_OxRdtase_chain4"/>
</dbReference>
<dbReference type="InterPro" id="IPR010227">
    <property type="entry name" value="NADH_Q_OxRdtase_chainM/4"/>
</dbReference>
<dbReference type="InterPro" id="IPR003918">
    <property type="entry name" value="NADH_UbQ_OxRdtase"/>
</dbReference>
<dbReference type="InterPro" id="IPR001750">
    <property type="entry name" value="ND/Mrp_TM"/>
</dbReference>
<dbReference type="NCBIfam" id="TIGR01972">
    <property type="entry name" value="NDH_I_M"/>
    <property type="match status" value="1"/>
</dbReference>
<dbReference type="PANTHER" id="PTHR43507:SF21">
    <property type="entry name" value="NAD(P)H-QUINONE OXIDOREDUCTASE CHAIN 4, CHLOROPLASTIC"/>
    <property type="match status" value="1"/>
</dbReference>
<dbReference type="PANTHER" id="PTHR43507">
    <property type="entry name" value="NADH-UBIQUINONE OXIDOREDUCTASE CHAIN 4"/>
    <property type="match status" value="1"/>
</dbReference>
<dbReference type="Pfam" id="PF00361">
    <property type="entry name" value="Proton_antipo_M"/>
    <property type="match status" value="1"/>
</dbReference>
<dbReference type="PRINTS" id="PR01437">
    <property type="entry name" value="NUOXDRDTASE4"/>
</dbReference>
<geneLocation type="chloroplast"/>
<gene>
    <name type="primary">ndhD</name>
    <name type="ordered locus">AtCg01050</name>
</gene>
<feature type="chain" id="PRO_0000118011" description="NAD(P)H-quinone oxidoreductase chain 4, chloroplastic">
    <location>
        <begin position="1"/>
        <end position="500"/>
    </location>
</feature>
<feature type="transmembrane region" description="Helical" evidence="1">
    <location>
        <begin position="4"/>
        <end position="24"/>
    </location>
</feature>
<feature type="transmembrane region" description="Helical" evidence="1">
    <location>
        <begin position="35"/>
        <end position="55"/>
    </location>
</feature>
<feature type="transmembrane region" description="Helical" evidence="1">
    <location>
        <begin position="87"/>
        <end position="107"/>
    </location>
</feature>
<feature type="transmembrane region" description="Helical" evidence="1">
    <location>
        <begin position="113"/>
        <end position="130"/>
    </location>
</feature>
<feature type="transmembrane region" description="Helical" evidence="1">
    <location>
        <begin position="134"/>
        <end position="154"/>
    </location>
</feature>
<feature type="transmembrane region" description="Helical" evidence="1">
    <location>
        <begin position="167"/>
        <end position="187"/>
    </location>
</feature>
<feature type="transmembrane region" description="Helical" evidence="1">
    <location>
        <begin position="211"/>
        <end position="231"/>
    </location>
</feature>
<feature type="transmembrane region" description="Helical" evidence="1">
    <location>
        <begin position="242"/>
        <end position="262"/>
    </location>
</feature>
<feature type="transmembrane region" description="Helical" evidence="1">
    <location>
        <begin position="272"/>
        <end position="292"/>
    </location>
</feature>
<feature type="transmembrane region" description="Helical" evidence="1">
    <location>
        <begin position="305"/>
        <end position="325"/>
    </location>
</feature>
<feature type="transmembrane region" description="Helical" evidence="1">
    <location>
        <begin position="330"/>
        <end position="350"/>
    </location>
</feature>
<feature type="transmembrane region" description="Helical" evidence="1">
    <location>
        <begin position="386"/>
        <end position="406"/>
    </location>
</feature>
<feature type="transmembrane region" description="Helical" evidence="1">
    <location>
        <begin position="416"/>
        <end position="436"/>
    </location>
</feature>
<feature type="transmembrane region" description="Helical" evidence="1">
    <location>
        <begin position="462"/>
        <end position="482"/>
    </location>
</feature>
<feature type="sequence conflict" description="In Ref. 2; CAA37837." evidence="3" ref="2">
    <original>R</original>
    <variation>K</variation>
    <location>
        <position position="27"/>
    </location>
</feature>
<comment type="catalytic activity">
    <reaction>
        <text>a plastoquinone + NADH + (n+1) H(+)(in) = a plastoquinol + NAD(+) + n H(+)(out)</text>
        <dbReference type="Rhea" id="RHEA:42608"/>
        <dbReference type="Rhea" id="RHEA-COMP:9561"/>
        <dbReference type="Rhea" id="RHEA-COMP:9562"/>
        <dbReference type="ChEBI" id="CHEBI:15378"/>
        <dbReference type="ChEBI" id="CHEBI:17757"/>
        <dbReference type="ChEBI" id="CHEBI:57540"/>
        <dbReference type="ChEBI" id="CHEBI:57945"/>
        <dbReference type="ChEBI" id="CHEBI:62192"/>
    </reaction>
</comment>
<comment type="catalytic activity">
    <reaction>
        <text>a plastoquinone + NADPH + (n+1) H(+)(in) = a plastoquinol + NADP(+) + n H(+)(out)</text>
        <dbReference type="Rhea" id="RHEA:42612"/>
        <dbReference type="Rhea" id="RHEA-COMP:9561"/>
        <dbReference type="Rhea" id="RHEA-COMP:9562"/>
        <dbReference type="ChEBI" id="CHEBI:15378"/>
        <dbReference type="ChEBI" id="CHEBI:17757"/>
        <dbReference type="ChEBI" id="CHEBI:57783"/>
        <dbReference type="ChEBI" id="CHEBI:58349"/>
        <dbReference type="ChEBI" id="CHEBI:62192"/>
    </reaction>
</comment>
<comment type="subcellular location">
    <subcellularLocation>
        <location evidence="3">Plastid</location>
        <location evidence="3">Chloroplast thylakoid membrane</location>
        <topology evidence="3">Multi-pass membrane protein</topology>
    </subcellularLocation>
</comment>
<comment type="RNA editing">
    <location>
        <position position="1" evidence="2"/>
    </location>
    <text>The initiator methionine is created by RNA editing.</text>
</comment>
<comment type="similarity">
    <text evidence="3">Belongs to the complex I subunit 4 family.</text>
</comment>
<comment type="caution">
    <text evidence="4">Was originally thought to originate from Synechocystis PCC6803.</text>
</comment>
<comment type="sequence caution" evidence="3">
    <conflict type="frameshift">
        <sequence resource="EMBL-CDS" id="CAA37837"/>
    </conflict>
</comment>
<evidence type="ECO:0000255" key="1"/>
<evidence type="ECO:0000269" key="2">
    <source>
    </source>
</evidence>
<evidence type="ECO:0000305" key="3"/>
<evidence type="ECO:0000305" key="4">
    <source>
    </source>
</evidence>
<sequence>MNDFPWLTIIVVFPISAGSLMLFLPHRGNKVNKWYTICICILELLLTTYAFCYNFKMDDPLIQLSEDYKWIDFFDFYWRMGIDGLSIGTILLTGFITTLATLAAFPVTRDSRFFHFLMLAMYSGQIGSFSSRDLLLFFIMWELELIPVYLLLSMWGGKKRLYSATKFILYTAGSSIFLLIGVLGISLYGSNEPTLNLELLANKSYPVTLEILFYIGFLIAFAVKSPIIPLHTWLPDTHGEAHYSTCMLLAGILLKMGAYGLVRINMELLPHAHSMFSPWLLVVGTIQIIYAASTSPGQRNLKKRIAYSSVSHMGFIIIGISSITDPGLNGAILQIISHGFIGAALFFLAGTSYDRIRLVYLDEMGGMAISIPKIFTMFTILSMASLALPGMSGFIAEFIVFFGIITSQKYFLISKIFIIFVMAIGMILTPIYLLSMLRQMFYGYKLINIKNFSFFDSGPRELFLSISILLPIIGIGIYPDFVLSLASDKVESILSNYFYG</sequence>
<keyword id="KW-0002">3D-structure</keyword>
<keyword id="KW-0150">Chloroplast</keyword>
<keyword id="KW-0472">Membrane</keyword>
<keyword id="KW-0520">NAD</keyword>
<keyword id="KW-0521">NADP</keyword>
<keyword id="KW-0934">Plastid</keyword>
<keyword id="KW-0618">Plastoquinone</keyword>
<keyword id="KW-0874">Quinone</keyword>
<keyword id="KW-1185">Reference proteome</keyword>
<keyword id="KW-0691">RNA editing</keyword>
<keyword id="KW-0793">Thylakoid</keyword>
<keyword id="KW-1278">Translocase</keyword>
<keyword id="KW-0812">Transmembrane</keyword>
<keyword id="KW-1133">Transmembrane helix</keyword>
<accession>P26288</accession>
<accession>Q9MRT9</accession>
<protein>
    <recommendedName>
        <fullName>NAD(P)H-quinone oxidoreductase chain 4, chloroplastic</fullName>
        <ecNumber>7.1.1.-</ecNumber>
    </recommendedName>
    <alternativeName>
        <fullName>NAD(P)H dehydrogenase, chain 4</fullName>
    </alternativeName>
    <alternativeName>
        <fullName>NADH-plastoquinone oxidoreductase chain 4</fullName>
    </alternativeName>
</protein>
<proteinExistence type="evidence at protein level"/>
<name>NU4C_ARATH</name>
<organism>
    <name type="scientific">Arabidopsis thaliana</name>
    <name type="common">Mouse-ear cress</name>
    <dbReference type="NCBI Taxonomy" id="3702"/>
    <lineage>
        <taxon>Eukaryota</taxon>
        <taxon>Viridiplantae</taxon>
        <taxon>Streptophyta</taxon>
        <taxon>Embryophyta</taxon>
        <taxon>Tracheophyta</taxon>
        <taxon>Spermatophyta</taxon>
        <taxon>Magnoliopsida</taxon>
        <taxon>eudicotyledons</taxon>
        <taxon>Gunneridae</taxon>
        <taxon>Pentapetalae</taxon>
        <taxon>rosids</taxon>
        <taxon>malvids</taxon>
        <taxon>Brassicales</taxon>
        <taxon>Brassicaceae</taxon>
        <taxon>Camelineae</taxon>
        <taxon>Arabidopsis</taxon>
    </lineage>
</organism>